<evidence type="ECO:0000250" key="1"/>
<evidence type="ECO:0000250" key="2">
    <source>
        <dbReference type="UniProtKB" id="P68363"/>
    </source>
</evidence>
<evidence type="ECO:0000256" key="3">
    <source>
        <dbReference type="SAM" id="MobiDB-lite"/>
    </source>
</evidence>
<evidence type="ECO:0000305" key="4"/>
<sequence length="452" mass="49653">MRECISIHIGQAGIQVGNACWELYCLEHGIQPDGQMPGDKTVGGGDDAFNTFFSETGAGKHVPRAVFVDLEPTVIDEVRTGAYRQLFHPEQLISGKEDAANNFARGHYTIGKEIVDLCLDRIRKLADNCTGLQGFLVFNAVGGGTGSGLGSLLLERLSVDYGKKSKLGFTVYPSPQVSTSVVEPYNSVLSTHSLLEHTDVAVLLDNEAIYDICRRSLDIERPTYTNLNRLVSQVISSLTASLRFDGALNVDVTEFQTNLVPYPRIHFMLSSYAPVISAEKAYHEQLSVAEITNSAFEPSSMMAKCDPRHGKYMACCLMYRGDVVPKDVNAAVATIKTKRTIQFVDWCPTGFKCGINYQPPTVVPGGDLAKVQRAVCMISNSTSVAEVFSRIDHKFDLMYAKRAFVHWYVGEGMEEGEFSEAREDLAALEKDYEEVGAESGDGDDDGLGEEEY</sequence>
<gene>
    <name type="primary">TUBA1</name>
</gene>
<proteinExistence type="inferred from homology"/>
<accession>P46259</accession>
<comment type="function">
    <text>Tubulin is the major constituent of microtubules, a cylinder consisting of laterally associated linear protofilaments composed of alpha- and beta-tubulin heterodimers. Microtubules grow by the addition of GTP-tubulin dimers to the microtubule end, where a stabilizing cap forms. Below the cap, tubulin dimers are in GDP-bound state, owing to GTPase activity of alpha-tubulin.</text>
</comment>
<comment type="catalytic activity">
    <reaction evidence="2">
        <text>GTP + H2O = GDP + phosphate + H(+)</text>
        <dbReference type="Rhea" id="RHEA:19669"/>
        <dbReference type="ChEBI" id="CHEBI:15377"/>
        <dbReference type="ChEBI" id="CHEBI:15378"/>
        <dbReference type="ChEBI" id="CHEBI:37565"/>
        <dbReference type="ChEBI" id="CHEBI:43474"/>
        <dbReference type="ChEBI" id="CHEBI:58189"/>
    </reaction>
    <physiologicalReaction direction="left-to-right" evidence="2">
        <dbReference type="Rhea" id="RHEA:19670"/>
    </physiologicalReaction>
</comment>
<comment type="cofactor">
    <cofactor evidence="2">
        <name>Mg(2+)</name>
        <dbReference type="ChEBI" id="CHEBI:18420"/>
    </cofactor>
</comment>
<comment type="subunit">
    <text>Dimer of alpha and beta chains. A typical microtubule is a hollow water-filled tube with an outer diameter of 25 nm and an inner diameter of 15 nM. Alpha-beta heterodimers associate head-to-tail to form protofilaments running lengthwise along the microtubule wall with the beta-tubulin subunit facing the microtubule plus end conferring a structural polarity. Microtubules usually have 13 protofilaments but different protofilament numbers can be found in some organisms and specialized cells.</text>
</comment>
<comment type="subcellular location">
    <subcellularLocation>
        <location>Cytoplasm</location>
        <location>Cytoskeleton</location>
    </subcellularLocation>
</comment>
<comment type="PTM">
    <text evidence="1">Undergoes a tyrosination/detyrosination cycle, the cyclic removal and re-addition of a C-terminal tyrosine residue by the enzymes tubulin tyrosine carboxypeptidase (TTCP) and tubulin tyrosine ligase (TTL), respectively.</text>
</comment>
<comment type="PTM">
    <text evidence="1">Acetylation of alpha chains at Lys-40 stabilizes microtubules and affects affinity and processivity of microtubule motors. This modification has a role in multiple cellular functions, ranging from cell motility, cell cycle progression or cell differentiation to intracellular trafficking and signaling (By similarity).</text>
</comment>
<comment type="similarity">
    <text evidence="4">Belongs to the tubulin family.</text>
</comment>
<feature type="chain" id="PRO_0000048210" description="Tubulin alpha-1 chain">
    <location>
        <begin position="1"/>
        <end position="452"/>
    </location>
</feature>
<feature type="region of interest" description="Disordered" evidence="3">
    <location>
        <begin position="430"/>
        <end position="452"/>
    </location>
</feature>
<feature type="compositionally biased region" description="Acidic residues" evidence="3">
    <location>
        <begin position="431"/>
        <end position="452"/>
    </location>
</feature>
<feature type="active site" evidence="2">
    <location>
        <position position="254"/>
    </location>
</feature>
<feature type="binding site" evidence="2">
    <location>
        <position position="11"/>
    </location>
    <ligand>
        <name>GTP</name>
        <dbReference type="ChEBI" id="CHEBI:37565"/>
    </ligand>
</feature>
<feature type="binding site" evidence="2">
    <location>
        <position position="71"/>
    </location>
    <ligand>
        <name>GTP</name>
        <dbReference type="ChEBI" id="CHEBI:37565"/>
    </ligand>
</feature>
<feature type="binding site" evidence="2">
    <location>
        <position position="71"/>
    </location>
    <ligand>
        <name>Mg(2+)</name>
        <dbReference type="ChEBI" id="CHEBI:18420"/>
    </ligand>
</feature>
<feature type="binding site" evidence="2">
    <location>
        <position position="144"/>
    </location>
    <ligand>
        <name>GTP</name>
        <dbReference type="ChEBI" id="CHEBI:37565"/>
    </ligand>
</feature>
<feature type="binding site" evidence="2">
    <location>
        <position position="145"/>
    </location>
    <ligand>
        <name>GTP</name>
        <dbReference type="ChEBI" id="CHEBI:37565"/>
    </ligand>
</feature>
<feature type="binding site" evidence="2">
    <location>
        <position position="179"/>
    </location>
    <ligand>
        <name>GTP</name>
        <dbReference type="ChEBI" id="CHEBI:37565"/>
    </ligand>
</feature>
<feature type="binding site" evidence="2">
    <location>
        <position position="206"/>
    </location>
    <ligand>
        <name>GTP</name>
        <dbReference type="ChEBI" id="CHEBI:37565"/>
    </ligand>
</feature>
<feature type="binding site" evidence="2">
    <location>
        <position position="228"/>
    </location>
    <ligand>
        <name>GTP</name>
        <dbReference type="ChEBI" id="CHEBI:37565"/>
    </ligand>
</feature>
<feature type="site" description="Involved in polymerization">
    <location>
        <position position="452"/>
    </location>
</feature>
<feature type="modified residue" description="N6-acetyllysine" evidence="1">
    <location>
        <position position="40"/>
    </location>
</feature>
<dbReference type="EC" id="3.6.5.-" evidence="2"/>
<dbReference type="EMBL" id="U12589">
    <property type="protein sequence ID" value="AAA79910.1"/>
    <property type="molecule type" value="Genomic_DNA"/>
</dbReference>
<dbReference type="PIR" id="S60233">
    <property type="entry name" value="S60233"/>
</dbReference>
<dbReference type="SMR" id="P46259"/>
<dbReference type="EnsemblPlants" id="Psat5g091400.1">
    <property type="protein sequence ID" value="Psat5g091400.1.cds"/>
    <property type="gene ID" value="Psat5g091400"/>
</dbReference>
<dbReference type="Gramene" id="Psat5g091400.1">
    <property type="protein sequence ID" value="Psat5g091400.1.cds"/>
    <property type="gene ID" value="Psat5g091400"/>
</dbReference>
<dbReference type="OrthoDB" id="6049624at2759"/>
<dbReference type="GO" id="GO:0005737">
    <property type="term" value="C:cytoplasm"/>
    <property type="evidence" value="ECO:0007669"/>
    <property type="project" value="UniProtKB-KW"/>
</dbReference>
<dbReference type="GO" id="GO:0005874">
    <property type="term" value="C:microtubule"/>
    <property type="evidence" value="ECO:0007669"/>
    <property type="project" value="UniProtKB-KW"/>
</dbReference>
<dbReference type="GO" id="GO:0005525">
    <property type="term" value="F:GTP binding"/>
    <property type="evidence" value="ECO:0007669"/>
    <property type="project" value="UniProtKB-KW"/>
</dbReference>
<dbReference type="GO" id="GO:0016787">
    <property type="term" value="F:hydrolase activity"/>
    <property type="evidence" value="ECO:0007669"/>
    <property type="project" value="UniProtKB-KW"/>
</dbReference>
<dbReference type="GO" id="GO:0046872">
    <property type="term" value="F:metal ion binding"/>
    <property type="evidence" value="ECO:0007669"/>
    <property type="project" value="UniProtKB-KW"/>
</dbReference>
<dbReference type="GO" id="GO:0005200">
    <property type="term" value="F:structural constituent of cytoskeleton"/>
    <property type="evidence" value="ECO:0007669"/>
    <property type="project" value="InterPro"/>
</dbReference>
<dbReference type="GO" id="GO:0007017">
    <property type="term" value="P:microtubule-based process"/>
    <property type="evidence" value="ECO:0007669"/>
    <property type="project" value="InterPro"/>
</dbReference>
<dbReference type="CDD" id="cd02186">
    <property type="entry name" value="alpha_tubulin"/>
    <property type="match status" value="1"/>
</dbReference>
<dbReference type="FunFam" id="1.10.287.600:FF:000005">
    <property type="entry name" value="Tubulin alpha chain"/>
    <property type="match status" value="1"/>
</dbReference>
<dbReference type="FunFam" id="3.30.1330.20:FF:000001">
    <property type="entry name" value="Tubulin alpha chain"/>
    <property type="match status" value="1"/>
</dbReference>
<dbReference type="FunFam" id="3.40.50.1440:FF:000004">
    <property type="entry name" value="Tubulin alpha chain"/>
    <property type="match status" value="1"/>
</dbReference>
<dbReference type="Gene3D" id="1.10.287.600">
    <property type="entry name" value="Helix hairpin bin"/>
    <property type="match status" value="1"/>
</dbReference>
<dbReference type="Gene3D" id="3.30.1330.20">
    <property type="entry name" value="Tubulin/FtsZ, C-terminal domain"/>
    <property type="match status" value="1"/>
</dbReference>
<dbReference type="Gene3D" id="3.40.50.1440">
    <property type="entry name" value="Tubulin/FtsZ, GTPase domain"/>
    <property type="match status" value="1"/>
</dbReference>
<dbReference type="InterPro" id="IPR002452">
    <property type="entry name" value="Alpha_tubulin"/>
</dbReference>
<dbReference type="InterPro" id="IPR008280">
    <property type="entry name" value="Tub_FtsZ_C"/>
</dbReference>
<dbReference type="InterPro" id="IPR000217">
    <property type="entry name" value="Tubulin"/>
</dbReference>
<dbReference type="InterPro" id="IPR037103">
    <property type="entry name" value="Tubulin/FtsZ-like_C"/>
</dbReference>
<dbReference type="InterPro" id="IPR018316">
    <property type="entry name" value="Tubulin/FtsZ_2-layer-sand-dom"/>
</dbReference>
<dbReference type="InterPro" id="IPR036525">
    <property type="entry name" value="Tubulin/FtsZ_GTPase_sf"/>
</dbReference>
<dbReference type="InterPro" id="IPR023123">
    <property type="entry name" value="Tubulin_C"/>
</dbReference>
<dbReference type="InterPro" id="IPR017975">
    <property type="entry name" value="Tubulin_CS"/>
</dbReference>
<dbReference type="InterPro" id="IPR003008">
    <property type="entry name" value="Tubulin_FtsZ_GTPase"/>
</dbReference>
<dbReference type="PANTHER" id="PTHR11588">
    <property type="entry name" value="TUBULIN"/>
    <property type="match status" value="1"/>
</dbReference>
<dbReference type="Pfam" id="PF00091">
    <property type="entry name" value="Tubulin"/>
    <property type="match status" value="1"/>
</dbReference>
<dbReference type="Pfam" id="PF03953">
    <property type="entry name" value="Tubulin_C"/>
    <property type="match status" value="1"/>
</dbReference>
<dbReference type="PRINTS" id="PR01162">
    <property type="entry name" value="ALPHATUBULIN"/>
</dbReference>
<dbReference type="PRINTS" id="PR01161">
    <property type="entry name" value="TUBULIN"/>
</dbReference>
<dbReference type="SMART" id="SM00864">
    <property type="entry name" value="Tubulin"/>
    <property type="match status" value="1"/>
</dbReference>
<dbReference type="SMART" id="SM00865">
    <property type="entry name" value="Tubulin_C"/>
    <property type="match status" value="1"/>
</dbReference>
<dbReference type="SUPFAM" id="SSF55307">
    <property type="entry name" value="Tubulin C-terminal domain-like"/>
    <property type="match status" value="1"/>
</dbReference>
<dbReference type="SUPFAM" id="SSF52490">
    <property type="entry name" value="Tubulin nucleotide-binding domain-like"/>
    <property type="match status" value="1"/>
</dbReference>
<dbReference type="PROSITE" id="PS00227">
    <property type="entry name" value="TUBULIN"/>
    <property type="match status" value="1"/>
</dbReference>
<organism>
    <name type="scientific">Pisum sativum</name>
    <name type="common">Garden pea</name>
    <name type="synonym">Lathyrus oleraceus</name>
    <dbReference type="NCBI Taxonomy" id="3888"/>
    <lineage>
        <taxon>Eukaryota</taxon>
        <taxon>Viridiplantae</taxon>
        <taxon>Streptophyta</taxon>
        <taxon>Embryophyta</taxon>
        <taxon>Tracheophyta</taxon>
        <taxon>Spermatophyta</taxon>
        <taxon>Magnoliopsida</taxon>
        <taxon>eudicotyledons</taxon>
        <taxon>Gunneridae</taxon>
        <taxon>Pentapetalae</taxon>
        <taxon>rosids</taxon>
        <taxon>fabids</taxon>
        <taxon>Fabales</taxon>
        <taxon>Fabaceae</taxon>
        <taxon>Papilionoideae</taxon>
        <taxon>50 kb inversion clade</taxon>
        <taxon>NPAAA clade</taxon>
        <taxon>Hologalegina</taxon>
        <taxon>IRL clade</taxon>
        <taxon>Fabeae</taxon>
        <taxon>Pisum</taxon>
    </lineage>
</organism>
<name>TBA1_PEA</name>
<reference key="1">
    <citation type="journal article" date="1995" name="Plant Mol. Biol.">
        <title>The Pisum sativum TubA1 gene, a member of a small family of alpha-tubulin sequences.</title>
        <authorList>
            <person name="Brierley H.L."/>
            <person name="Webster P."/>
            <person name="Long S.R."/>
        </authorList>
    </citation>
    <scope>NUCLEOTIDE SEQUENCE [GENOMIC DNA]</scope>
    <source>
        <strain>cv. Alaska</strain>
    </source>
</reference>
<keyword id="KW-0007">Acetylation</keyword>
<keyword id="KW-0963">Cytoplasm</keyword>
<keyword id="KW-0206">Cytoskeleton</keyword>
<keyword id="KW-0342">GTP-binding</keyword>
<keyword id="KW-0378">Hydrolase</keyword>
<keyword id="KW-0460">Magnesium</keyword>
<keyword id="KW-0479">Metal-binding</keyword>
<keyword id="KW-0493">Microtubule</keyword>
<keyword id="KW-0547">Nucleotide-binding</keyword>
<protein>
    <recommendedName>
        <fullName>Tubulin alpha-1 chain</fullName>
        <ecNumber evidence="2">3.6.5.-</ecNumber>
    </recommendedName>
</protein>